<protein>
    <recommendedName>
        <fullName evidence="1">Tyrosine recombinase XerC</fullName>
    </recommendedName>
</protein>
<evidence type="ECO:0000255" key="1">
    <source>
        <dbReference type="HAMAP-Rule" id="MF_01808"/>
    </source>
</evidence>
<evidence type="ECO:0000255" key="2">
    <source>
        <dbReference type="PROSITE-ProRule" id="PRU01246"/>
    </source>
</evidence>
<evidence type="ECO:0000255" key="3">
    <source>
        <dbReference type="PROSITE-ProRule" id="PRU01248"/>
    </source>
</evidence>
<proteinExistence type="inferred from homology"/>
<name>XERC_PSE14</name>
<comment type="function">
    <text evidence="1">Site-specific tyrosine recombinase, which acts by catalyzing the cutting and rejoining of the recombining DNA molecules. The XerC-XerD complex is essential to convert dimers of the bacterial chromosome into monomers to permit their segregation at cell division. It also contributes to the segregational stability of plasmids.</text>
</comment>
<comment type="subunit">
    <text evidence="1">Forms a cyclic heterotetrameric complex composed of two molecules of XerC and two molecules of XerD.</text>
</comment>
<comment type="subcellular location">
    <subcellularLocation>
        <location evidence="1">Cytoplasm</location>
    </subcellularLocation>
</comment>
<comment type="similarity">
    <text evidence="1">Belongs to the 'phage' integrase family. XerC subfamily.</text>
</comment>
<sequence>MEQHLDAYCMHLRSERQVSPHTLEAYRRDLSKVLAYCQKAQRSSWNDLDIQHLRSFTARQHQQGQSSRSLARMLSAVRGFYKYLNREGICQHDPANGLSPPKGERRLPKTLDTDRTAQLLDGGVEDDFLAHRDQAILELLYSSGLRLSELTGLNLDQLDLRDGLVQVLGKGSKTRVLPVGSKARQALEIWLPLRALTNPQDDAVFVSQQGKRLGPRTIQVRLKAAGERELGQNLHPHMLRHSFASHLLESSQDLRAVQELLGHADIKTTQIYTHLDFQHLATVYDSAHPRAKRKGAADD</sequence>
<organism>
    <name type="scientific">Pseudomonas savastanoi pv. phaseolicola (strain 1448A / Race 6)</name>
    <name type="common">Pseudomonas syringae pv. phaseolicola (strain 1448A / Race 6)</name>
    <dbReference type="NCBI Taxonomy" id="264730"/>
    <lineage>
        <taxon>Bacteria</taxon>
        <taxon>Pseudomonadati</taxon>
        <taxon>Pseudomonadota</taxon>
        <taxon>Gammaproteobacteria</taxon>
        <taxon>Pseudomonadales</taxon>
        <taxon>Pseudomonadaceae</taxon>
        <taxon>Pseudomonas</taxon>
    </lineage>
</organism>
<feature type="chain" id="PRO_1000070023" description="Tyrosine recombinase XerC">
    <location>
        <begin position="1"/>
        <end position="299"/>
    </location>
</feature>
<feature type="domain" description="Core-binding (CB)" evidence="3">
    <location>
        <begin position="1"/>
        <end position="85"/>
    </location>
</feature>
<feature type="domain" description="Tyr recombinase" evidence="2">
    <location>
        <begin position="106"/>
        <end position="285"/>
    </location>
</feature>
<feature type="active site" evidence="1">
    <location>
        <position position="146"/>
    </location>
</feature>
<feature type="active site" evidence="1">
    <location>
        <position position="170"/>
    </location>
</feature>
<feature type="active site" evidence="1">
    <location>
        <position position="237"/>
    </location>
</feature>
<feature type="active site" evidence="1">
    <location>
        <position position="240"/>
    </location>
</feature>
<feature type="active site" evidence="1">
    <location>
        <position position="263"/>
    </location>
</feature>
<feature type="active site" description="O-(3'-phospho-DNA)-tyrosine intermediate" evidence="1">
    <location>
        <position position="272"/>
    </location>
</feature>
<keyword id="KW-0131">Cell cycle</keyword>
<keyword id="KW-0132">Cell division</keyword>
<keyword id="KW-0159">Chromosome partition</keyword>
<keyword id="KW-0963">Cytoplasm</keyword>
<keyword id="KW-0229">DNA integration</keyword>
<keyword id="KW-0233">DNA recombination</keyword>
<keyword id="KW-0238">DNA-binding</keyword>
<reference key="1">
    <citation type="journal article" date="2005" name="J. Bacteriol.">
        <title>Whole-genome sequence analysis of Pseudomonas syringae pv. phaseolicola 1448A reveals divergence among pathovars in genes involved in virulence and transposition.</title>
        <authorList>
            <person name="Joardar V."/>
            <person name="Lindeberg M."/>
            <person name="Jackson R.W."/>
            <person name="Selengut J."/>
            <person name="Dodson R."/>
            <person name="Brinkac L.M."/>
            <person name="Daugherty S.C."/>
            <person name="DeBoy R.T."/>
            <person name="Durkin A.S."/>
            <person name="Gwinn Giglio M."/>
            <person name="Madupu R."/>
            <person name="Nelson W.C."/>
            <person name="Rosovitz M.J."/>
            <person name="Sullivan S.A."/>
            <person name="Crabtree J."/>
            <person name="Creasy T."/>
            <person name="Davidsen T.M."/>
            <person name="Haft D.H."/>
            <person name="Zafar N."/>
            <person name="Zhou L."/>
            <person name="Halpin R."/>
            <person name="Holley T."/>
            <person name="Khouri H.M."/>
            <person name="Feldblyum T.V."/>
            <person name="White O."/>
            <person name="Fraser C.M."/>
            <person name="Chatterjee A.K."/>
            <person name="Cartinhour S."/>
            <person name="Schneider D."/>
            <person name="Mansfield J.W."/>
            <person name="Collmer A."/>
            <person name="Buell R."/>
        </authorList>
    </citation>
    <scope>NUCLEOTIDE SEQUENCE [LARGE SCALE GENOMIC DNA]</scope>
    <source>
        <strain>1448A / Race 6</strain>
    </source>
</reference>
<gene>
    <name evidence="1" type="primary">xerC</name>
    <name type="ordered locus">PSPPH_5005</name>
</gene>
<dbReference type="EMBL" id="CP000058">
    <property type="protein sequence ID" value="AAZ34460.1"/>
    <property type="molecule type" value="Genomic_DNA"/>
</dbReference>
<dbReference type="RefSeq" id="WP_011169849.1">
    <property type="nucleotide sequence ID" value="NC_005773.3"/>
</dbReference>
<dbReference type="SMR" id="Q48C04"/>
<dbReference type="KEGG" id="psp:PSPPH_5005"/>
<dbReference type="eggNOG" id="COG4973">
    <property type="taxonomic scope" value="Bacteria"/>
</dbReference>
<dbReference type="HOGENOM" id="CLU_027562_9_0_6"/>
<dbReference type="Proteomes" id="UP000000551">
    <property type="component" value="Chromosome"/>
</dbReference>
<dbReference type="GO" id="GO:0005737">
    <property type="term" value="C:cytoplasm"/>
    <property type="evidence" value="ECO:0007669"/>
    <property type="project" value="UniProtKB-SubCell"/>
</dbReference>
<dbReference type="GO" id="GO:0003677">
    <property type="term" value="F:DNA binding"/>
    <property type="evidence" value="ECO:0007669"/>
    <property type="project" value="UniProtKB-KW"/>
</dbReference>
<dbReference type="GO" id="GO:0009037">
    <property type="term" value="F:tyrosine-based site-specific recombinase activity"/>
    <property type="evidence" value="ECO:0007669"/>
    <property type="project" value="UniProtKB-UniRule"/>
</dbReference>
<dbReference type="GO" id="GO:0051301">
    <property type="term" value="P:cell division"/>
    <property type="evidence" value="ECO:0007669"/>
    <property type="project" value="UniProtKB-KW"/>
</dbReference>
<dbReference type="GO" id="GO:0007059">
    <property type="term" value="P:chromosome segregation"/>
    <property type="evidence" value="ECO:0007669"/>
    <property type="project" value="UniProtKB-UniRule"/>
</dbReference>
<dbReference type="GO" id="GO:0006313">
    <property type="term" value="P:DNA transposition"/>
    <property type="evidence" value="ECO:0007669"/>
    <property type="project" value="UniProtKB-UniRule"/>
</dbReference>
<dbReference type="CDD" id="cd00798">
    <property type="entry name" value="INT_XerDC_C"/>
    <property type="match status" value="1"/>
</dbReference>
<dbReference type="Gene3D" id="1.10.150.130">
    <property type="match status" value="1"/>
</dbReference>
<dbReference type="Gene3D" id="1.10.443.10">
    <property type="entry name" value="Intergrase catalytic core"/>
    <property type="match status" value="1"/>
</dbReference>
<dbReference type="HAMAP" id="MF_01808">
    <property type="entry name" value="Recomb_XerC_XerD"/>
    <property type="match status" value="1"/>
</dbReference>
<dbReference type="InterPro" id="IPR044068">
    <property type="entry name" value="CB"/>
</dbReference>
<dbReference type="InterPro" id="IPR011010">
    <property type="entry name" value="DNA_brk_join_enz"/>
</dbReference>
<dbReference type="InterPro" id="IPR013762">
    <property type="entry name" value="Integrase-like_cat_sf"/>
</dbReference>
<dbReference type="InterPro" id="IPR002104">
    <property type="entry name" value="Integrase_catalytic"/>
</dbReference>
<dbReference type="InterPro" id="IPR010998">
    <property type="entry name" value="Integrase_recombinase_N"/>
</dbReference>
<dbReference type="InterPro" id="IPR004107">
    <property type="entry name" value="Integrase_SAM-like_N"/>
</dbReference>
<dbReference type="InterPro" id="IPR011931">
    <property type="entry name" value="Recomb_XerC"/>
</dbReference>
<dbReference type="InterPro" id="IPR023009">
    <property type="entry name" value="Tyrosine_recombinase_XerC/XerD"/>
</dbReference>
<dbReference type="InterPro" id="IPR050090">
    <property type="entry name" value="Tyrosine_recombinase_XerCD"/>
</dbReference>
<dbReference type="NCBIfam" id="NF001399">
    <property type="entry name" value="PRK00283.1"/>
    <property type="match status" value="1"/>
</dbReference>
<dbReference type="NCBIfam" id="TIGR02224">
    <property type="entry name" value="recomb_XerC"/>
    <property type="match status" value="1"/>
</dbReference>
<dbReference type="PANTHER" id="PTHR30349">
    <property type="entry name" value="PHAGE INTEGRASE-RELATED"/>
    <property type="match status" value="1"/>
</dbReference>
<dbReference type="PANTHER" id="PTHR30349:SF81">
    <property type="entry name" value="TYROSINE RECOMBINASE XERC"/>
    <property type="match status" value="1"/>
</dbReference>
<dbReference type="Pfam" id="PF02899">
    <property type="entry name" value="Phage_int_SAM_1"/>
    <property type="match status" value="1"/>
</dbReference>
<dbReference type="Pfam" id="PF00589">
    <property type="entry name" value="Phage_integrase"/>
    <property type="match status" value="1"/>
</dbReference>
<dbReference type="SUPFAM" id="SSF56349">
    <property type="entry name" value="DNA breaking-rejoining enzymes"/>
    <property type="match status" value="1"/>
</dbReference>
<dbReference type="PROSITE" id="PS51900">
    <property type="entry name" value="CB"/>
    <property type="match status" value="1"/>
</dbReference>
<dbReference type="PROSITE" id="PS51898">
    <property type="entry name" value="TYR_RECOMBINASE"/>
    <property type="match status" value="1"/>
</dbReference>
<accession>Q48C04</accession>